<gene>
    <name evidence="1" type="primary">tgt</name>
    <name type="ordered locus">Acid_1276</name>
</gene>
<protein>
    <recommendedName>
        <fullName evidence="1">Queuine tRNA-ribosyltransferase</fullName>
        <ecNumber evidence="1">2.4.2.29</ecNumber>
    </recommendedName>
    <alternativeName>
        <fullName evidence="1">Guanine insertion enzyme</fullName>
    </alternativeName>
    <alternativeName>
        <fullName evidence="1">tRNA-guanine transglycosylase</fullName>
    </alternativeName>
</protein>
<sequence length="379" mass="42674">MPQISFEVVAECPHTRARAGVLHTAHGDIETPVFMPVGTQATVKGLTQRDLAEDLGVKILLSNTYHLYLRPGHELIRQMGGLHKFMSWPNAILTDSGGFQVFSLSGLRKIHEHGVVFQSHLNGDTHKFTPESTVDVQLAYGSDILMVLDECPEYPVSHEYARESMQRTVRWAREANEHFLERMKQMPTRHALFPIVQGSMFTDLRRECATALVDLDTDGYAIGGLSVGEPRPLSLEVVEATEAILPRTKPRYAMGVGMPAELPEYVARGIDMMDCVLPSRNARNGYLFTSEGRVIIKHARYKDDEGPLDPRCACYTCKSYSRAYLRHLFQSGEILFSVLATRHNIQRYLDIMREIRHAIISGSFPDYLRCVQSSLHDAG</sequence>
<reference key="1">
    <citation type="journal article" date="2009" name="Appl. Environ. Microbiol.">
        <title>Three genomes from the phylum Acidobacteria provide insight into the lifestyles of these microorganisms in soils.</title>
        <authorList>
            <person name="Ward N.L."/>
            <person name="Challacombe J.F."/>
            <person name="Janssen P.H."/>
            <person name="Henrissat B."/>
            <person name="Coutinho P.M."/>
            <person name="Wu M."/>
            <person name="Xie G."/>
            <person name="Haft D.H."/>
            <person name="Sait M."/>
            <person name="Badger J."/>
            <person name="Barabote R.D."/>
            <person name="Bradley B."/>
            <person name="Brettin T.S."/>
            <person name="Brinkac L.M."/>
            <person name="Bruce D."/>
            <person name="Creasy T."/>
            <person name="Daugherty S.C."/>
            <person name="Davidsen T.M."/>
            <person name="DeBoy R.T."/>
            <person name="Detter J.C."/>
            <person name="Dodson R.J."/>
            <person name="Durkin A.S."/>
            <person name="Ganapathy A."/>
            <person name="Gwinn-Giglio M."/>
            <person name="Han C.S."/>
            <person name="Khouri H."/>
            <person name="Kiss H."/>
            <person name="Kothari S.P."/>
            <person name="Madupu R."/>
            <person name="Nelson K.E."/>
            <person name="Nelson W.C."/>
            <person name="Paulsen I."/>
            <person name="Penn K."/>
            <person name="Ren Q."/>
            <person name="Rosovitz M.J."/>
            <person name="Selengut J.D."/>
            <person name="Shrivastava S."/>
            <person name="Sullivan S.A."/>
            <person name="Tapia R."/>
            <person name="Thompson L.S."/>
            <person name="Watkins K.L."/>
            <person name="Yang Q."/>
            <person name="Yu C."/>
            <person name="Zafar N."/>
            <person name="Zhou L."/>
            <person name="Kuske C.R."/>
        </authorList>
    </citation>
    <scope>NUCLEOTIDE SEQUENCE [LARGE SCALE GENOMIC DNA]</scope>
    <source>
        <strain>Ellin6076</strain>
    </source>
</reference>
<evidence type="ECO:0000255" key="1">
    <source>
        <dbReference type="HAMAP-Rule" id="MF_00168"/>
    </source>
</evidence>
<organism>
    <name type="scientific">Solibacter usitatus (strain Ellin6076)</name>
    <dbReference type="NCBI Taxonomy" id="234267"/>
    <lineage>
        <taxon>Bacteria</taxon>
        <taxon>Pseudomonadati</taxon>
        <taxon>Acidobacteriota</taxon>
        <taxon>Terriglobia</taxon>
        <taxon>Bryobacterales</taxon>
        <taxon>Solibacteraceae</taxon>
        <taxon>Candidatus Solibacter</taxon>
    </lineage>
</organism>
<dbReference type="EC" id="2.4.2.29" evidence="1"/>
<dbReference type="EMBL" id="CP000473">
    <property type="protein sequence ID" value="ABJ82270.1"/>
    <property type="molecule type" value="Genomic_DNA"/>
</dbReference>
<dbReference type="SMR" id="Q029K6"/>
<dbReference type="FunCoup" id="Q029K6">
    <property type="interactions" value="644"/>
</dbReference>
<dbReference type="STRING" id="234267.Acid_1276"/>
<dbReference type="KEGG" id="sus:Acid_1276"/>
<dbReference type="eggNOG" id="COG0343">
    <property type="taxonomic scope" value="Bacteria"/>
</dbReference>
<dbReference type="HOGENOM" id="CLU_022060_0_1_0"/>
<dbReference type="InParanoid" id="Q029K6"/>
<dbReference type="OrthoDB" id="9805417at2"/>
<dbReference type="UniPathway" id="UPA00392"/>
<dbReference type="GO" id="GO:0005829">
    <property type="term" value="C:cytosol"/>
    <property type="evidence" value="ECO:0007669"/>
    <property type="project" value="TreeGrafter"/>
</dbReference>
<dbReference type="GO" id="GO:0046872">
    <property type="term" value="F:metal ion binding"/>
    <property type="evidence" value="ECO:0007669"/>
    <property type="project" value="UniProtKB-KW"/>
</dbReference>
<dbReference type="GO" id="GO:0008479">
    <property type="term" value="F:tRNA-guanosine(34) queuine transglycosylase activity"/>
    <property type="evidence" value="ECO:0007669"/>
    <property type="project" value="UniProtKB-UniRule"/>
</dbReference>
<dbReference type="GO" id="GO:0008616">
    <property type="term" value="P:queuosine biosynthetic process"/>
    <property type="evidence" value="ECO:0007669"/>
    <property type="project" value="UniProtKB-UniRule"/>
</dbReference>
<dbReference type="GO" id="GO:0002099">
    <property type="term" value="P:tRNA wobble guanine modification"/>
    <property type="evidence" value="ECO:0007669"/>
    <property type="project" value="TreeGrafter"/>
</dbReference>
<dbReference type="GO" id="GO:0101030">
    <property type="term" value="P:tRNA-guanine transglycosylation"/>
    <property type="evidence" value="ECO:0007669"/>
    <property type="project" value="InterPro"/>
</dbReference>
<dbReference type="FunFam" id="3.20.20.105:FF:000001">
    <property type="entry name" value="Queuine tRNA-ribosyltransferase"/>
    <property type="match status" value="1"/>
</dbReference>
<dbReference type="Gene3D" id="3.20.20.105">
    <property type="entry name" value="Queuine tRNA-ribosyltransferase-like"/>
    <property type="match status" value="1"/>
</dbReference>
<dbReference type="HAMAP" id="MF_00168">
    <property type="entry name" value="Q_tRNA_Tgt"/>
    <property type="match status" value="1"/>
</dbReference>
<dbReference type="InterPro" id="IPR050076">
    <property type="entry name" value="ArchSynthase1/Queuine_TRR"/>
</dbReference>
<dbReference type="InterPro" id="IPR004803">
    <property type="entry name" value="TGT"/>
</dbReference>
<dbReference type="InterPro" id="IPR036511">
    <property type="entry name" value="TGT-like_sf"/>
</dbReference>
<dbReference type="InterPro" id="IPR002616">
    <property type="entry name" value="tRNA_ribo_trans-like"/>
</dbReference>
<dbReference type="NCBIfam" id="TIGR00430">
    <property type="entry name" value="Q_tRNA_tgt"/>
    <property type="match status" value="1"/>
</dbReference>
<dbReference type="NCBIfam" id="TIGR00449">
    <property type="entry name" value="tgt_general"/>
    <property type="match status" value="1"/>
</dbReference>
<dbReference type="PANTHER" id="PTHR46499">
    <property type="entry name" value="QUEUINE TRNA-RIBOSYLTRANSFERASE"/>
    <property type="match status" value="1"/>
</dbReference>
<dbReference type="PANTHER" id="PTHR46499:SF1">
    <property type="entry name" value="QUEUINE TRNA-RIBOSYLTRANSFERASE"/>
    <property type="match status" value="1"/>
</dbReference>
<dbReference type="Pfam" id="PF01702">
    <property type="entry name" value="TGT"/>
    <property type="match status" value="1"/>
</dbReference>
<dbReference type="SUPFAM" id="SSF51713">
    <property type="entry name" value="tRNA-guanine transglycosylase"/>
    <property type="match status" value="1"/>
</dbReference>
<accession>Q029K6</accession>
<name>TGT_SOLUE</name>
<feature type="chain" id="PRO_1000077021" description="Queuine tRNA-ribosyltransferase">
    <location>
        <begin position="1"/>
        <end position="379"/>
    </location>
</feature>
<feature type="region of interest" description="RNA binding" evidence="1">
    <location>
        <begin position="255"/>
        <end position="261"/>
    </location>
</feature>
<feature type="active site" description="Proton acceptor" evidence="1">
    <location>
        <position position="95"/>
    </location>
</feature>
<feature type="active site" description="Nucleophile" evidence="1">
    <location>
        <position position="274"/>
    </location>
</feature>
<feature type="binding site" evidence="1">
    <location>
        <begin position="95"/>
        <end position="99"/>
    </location>
    <ligand>
        <name>substrate</name>
    </ligand>
</feature>
<feature type="binding site" evidence="1">
    <location>
        <position position="149"/>
    </location>
    <ligand>
        <name>substrate</name>
    </ligand>
</feature>
<feature type="binding site" evidence="1">
    <location>
        <position position="197"/>
    </location>
    <ligand>
        <name>substrate</name>
    </ligand>
</feature>
<feature type="binding site" evidence="1">
    <location>
        <position position="224"/>
    </location>
    <ligand>
        <name>substrate</name>
    </ligand>
</feature>
<feature type="binding site" evidence="1">
    <location>
        <position position="312"/>
    </location>
    <ligand>
        <name>Zn(2+)</name>
        <dbReference type="ChEBI" id="CHEBI:29105"/>
    </ligand>
</feature>
<feature type="binding site" evidence="1">
    <location>
        <position position="314"/>
    </location>
    <ligand>
        <name>Zn(2+)</name>
        <dbReference type="ChEBI" id="CHEBI:29105"/>
    </ligand>
</feature>
<feature type="binding site" evidence="1">
    <location>
        <position position="317"/>
    </location>
    <ligand>
        <name>Zn(2+)</name>
        <dbReference type="ChEBI" id="CHEBI:29105"/>
    </ligand>
</feature>
<feature type="binding site" evidence="1">
    <location>
        <position position="343"/>
    </location>
    <ligand>
        <name>Zn(2+)</name>
        <dbReference type="ChEBI" id="CHEBI:29105"/>
    </ligand>
</feature>
<keyword id="KW-0328">Glycosyltransferase</keyword>
<keyword id="KW-0479">Metal-binding</keyword>
<keyword id="KW-0671">Queuosine biosynthesis</keyword>
<keyword id="KW-0808">Transferase</keyword>
<keyword id="KW-0819">tRNA processing</keyword>
<keyword id="KW-0862">Zinc</keyword>
<proteinExistence type="inferred from homology"/>
<comment type="function">
    <text evidence="1">Catalyzes the base-exchange of a guanine (G) residue with the queuine precursor 7-aminomethyl-7-deazaguanine (PreQ1) at position 34 (anticodon wobble position) in tRNAs with GU(N) anticodons (tRNA-Asp, -Asn, -His and -Tyr). Catalysis occurs through a double-displacement mechanism. The nucleophile active site attacks the C1' of nucleotide 34 to detach the guanine base from the RNA, forming a covalent enzyme-RNA intermediate. The proton acceptor active site deprotonates the incoming PreQ1, allowing a nucleophilic attack on the C1' of the ribose to form the product. After dissociation, two additional enzymatic reactions on the tRNA convert PreQ1 to queuine (Q), resulting in the hypermodified nucleoside queuosine (7-(((4,5-cis-dihydroxy-2-cyclopenten-1-yl)amino)methyl)-7-deazaguanosine).</text>
</comment>
<comment type="catalytic activity">
    <reaction evidence="1">
        <text>7-aminomethyl-7-carbaguanine + guanosine(34) in tRNA = 7-aminomethyl-7-carbaguanosine(34) in tRNA + guanine</text>
        <dbReference type="Rhea" id="RHEA:24104"/>
        <dbReference type="Rhea" id="RHEA-COMP:10341"/>
        <dbReference type="Rhea" id="RHEA-COMP:10342"/>
        <dbReference type="ChEBI" id="CHEBI:16235"/>
        <dbReference type="ChEBI" id="CHEBI:58703"/>
        <dbReference type="ChEBI" id="CHEBI:74269"/>
        <dbReference type="ChEBI" id="CHEBI:82833"/>
        <dbReference type="EC" id="2.4.2.29"/>
    </reaction>
</comment>
<comment type="cofactor">
    <cofactor evidence="1">
        <name>Zn(2+)</name>
        <dbReference type="ChEBI" id="CHEBI:29105"/>
    </cofactor>
    <text evidence="1">Binds 1 zinc ion per subunit.</text>
</comment>
<comment type="pathway">
    <text evidence="1">tRNA modification; tRNA-queuosine biosynthesis.</text>
</comment>
<comment type="subunit">
    <text evidence="1">Homodimer. Within each dimer, one monomer is responsible for RNA recognition and catalysis, while the other monomer binds to the replacement base PreQ1.</text>
</comment>
<comment type="similarity">
    <text evidence="1">Belongs to the queuine tRNA-ribosyltransferase family.</text>
</comment>